<accession>P25220</accession>
<organism>
    <name type="scientific">Avian infectious bursal disease virus (strain PBG-98)</name>
    <name type="common">IBDV</name>
    <name type="synonym">Gumboro disease virus</name>
    <dbReference type="NCBI Taxonomy" id="11000"/>
    <lineage>
        <taxon>Viruses</taxon>
        <taxon>Riboviria</taxon>
        <taxon>Orthornavirae</taxon>
        <taxon>Birnaviridae</taxon>
        <taxon>Avibirnavirus</taxon>
        <taxon>Avibirnavirus gumboroense</taxon>
    </lineage>
</organism>
<comment type="function">
    <text evidence="1">Capsid protein VP2 self assembles to form an icosahedral capsid with a T=13 symmetry, about 70 nm in diameter, and consisting of 260 VP2 trimers. The capsid encapsulates the genomic dsRNA. VP2 is also involved in attachment and entry into the host cell by interacting with host ITGA4/ITGB1 (By similarity).</text>
</comment>
<comment type="function">
    <text evidence="1">The precursor of VP2 plays an important role in capsid assembly. First, pre-VP2 and VP2 oligomers assemble to form a procapsid. Then, the pre-VP2 intermediates may be processed into VP2 proteins by proteolytic cleavage mediated by VP4 to obtain the mature virion. The final capsid is composed of pentamers and hexamers but VP2 has a natural tendency to assemble into all-pentameric structures. Therefore pre-VP2 may be required to allow formation of the hexameric structures (By similarity).</text>
</comment>
<comment type="function">
    <text evidence="2">Protease VP4 is a serine protease that cleaves the polyprotein into its final products. Pre-VP2 is first partially cleaved, and may be completely processed by VP4 upon capsid maturation.</text>
</comment>
<comment type="function">
    <text evidence="1">Capsid protein VP3 plays a key role in virion assembly by providing a scaffold for the capsid made of VP2. May self-assemble to form a T=4-like icosahedral inner-capsid composed of at least 180 trimers. Plays a role in genomic RNA packaging by recruiting VP1 into the capsid and interacting with the dsRNA genome segments to form a ribonucleoprotein complex. Additionally, the interaction of the VP3 C-terminal tail with VP1 removes the inherent structural blockade of the polymerase active site. Thus, VP3 can also function as a transcriptional activator (By similarity).</text>
</comment>
<comment type="function">
    <text evidence="1">Structural peptide 1 is a small peptide derived from pre-VP2 C-terminus. It destabilizes and perforates cell membranes, suggesting a role during entry (By similarity).</text>
</comment>
<comment type="function">
    <text evidence="1">Structural peptide 2 is a small peptide derived from pVP2 C-terminus. It is not essential for the virus viability, but viral growth is affected when missing (By similarity).</text>
</comment>
<comment type="function">
    <text evidence="1">Structural peptide 3 is a small peptide derived from pVP2 C-terminus. It is not essential for the virus viability, but viral growth is affected when missing (By similarity).</text>
</comment>
<comment type="function">
    <text evidence="1">Structural peptide 4 is a small peptide derived from pVP2 C-terminus. It is essential for the virus viability (By similarity).</text>
</comment>
<comment type="subunit">
    <molecule>Capsid protein VP2</molecule>
    <text evidence="1">Homotrimer. A central divalent metal stabilizes the VP2 trimer (By similarity). Interacts with host ITGA4/ITGB1.</text>
</comment>
<comment type="subunit">
    <molecule>Capsid protein VP3</molecule>
    <text evidence="1 4">Homodimer. Interacts (via C-terminus) with VP1 in the cytoplasm. Interacts with VP2 (By similarity).</text>
</comment>
<comment type="subcellular location">
    <molecule>Capsid protein VP2</molecule>
    <subcellularLocation>
        <location evidence="5">Virion</location>
    </subcellularLocation>
    <subcellularLocation>
        <location evidence="5">Host cytoplasm</location>
    </subcellularLocation>
</comment>
<comment type="subcellular location">
    <molecule>Capsid protein VP3</molecule>
    <subcellularLocation>
        <location evidence="5">Virion</location>
    </subcellularLocation>
    <subcellularLocation>
        <location evidence="5">Host cytoplasm</location>
    </subcellularLocation>
</comment>
<comment type="subcellular location">
    <molecule>Structural peptide 1</molecule>
    <subcellularLocation>
        <location evidence="5">Virion</location>
    </subcellularLocation>
    <subcellularLocation>
        <location evidence="5">Host cytoplasm</location>
    </subcellularLocation>
</comment>
<comment type="subcellular location">
    <molecule>Structural peptide 2</molecule>
    <subcellularLocation>
        <location evidence="5">Virion</location>
    </subcellularLocation>
    <subcellularLocation>
        <location evidence="5">Host cytoplasm</location>
    </subcellularLocation>
</comment>
<comment type="subcellular location">
    <molecule>Structural peptide 3</molecule>
    <subcellularLocation>
        <location evidence="5">Virion</location>
    </subcellularLocation>
    <subcellularLocation>
        <location evidence="5">Host cytoplasm</location>
    </subcellularLocation>
</comment>
<comment type="subcellular location">
    <molecule>Structural peptide 4</molecule>
    <subcellularLocation>
        <location evidence="5">Virion</location>
    </subcellularLocation>
    <subcellularLocation>
        <location evidence="5">Host cytoplasm</location>
    </subcellularLocation>
</comment>
<comment type="PTM">
    <text evidence="1">Specific enzymatic cleavages yield mature proteins. The capsid assembly seems to be regulated by polyprotein processing. The protease VP4 cleaves itself off the polyprotein, thus releasing pre-VP2 and VP3 within the infected cell. During capsid assembly, the C-terminus of pre-VP2 is further processed by VP4, giving rise to VP2, the external capsid protein and three small peptides that all stay closely associated with the capsid (By similarity).</text>
</comment>
<evidence type="ECO:0000250" key="1"/>
<evidence type="ECO:0000255" key="2">
    <source>
        <dbReference type="PROSITE-ProRule" id="PRU00881"/>
    </source>
</evidence>
<evidence type="ECO:0000256" key="3">
    <source>
        <dbReference type="SAM" id="MobiDB-lite"/>
    </source>
</evidence>
<evidence type="ECO:0000269" key="4">
    <source>
    </source>
</evidence>
<evidence type="ECO:0000305" key="5"/>
<evidence type="ECO:0007829" key="6">
    <source>
        <dbReference type="PDB" id="2R18"/>
    </source>
</evidence>
<feature type="chain" id="PRO_0000392594" description="Structural polyprotein">
    <location>
        <begin position="1" status="less than"/>
        <end position="993"/>
    </location>
</feature>
<feature type="chain" id="PRO_0000036773" description="Capsid protein VP2">
    <location>
        <begin position="1" status="less than"/>
        <end position="422"/>
    </location>
</feature>
<feature type="chain" id="PRO_0000392595" description="Precursor of VP2">
    <location>
        <begin position="1"/>
        <end position="493"/>
    </location>
</feature>
<feature type="peptide" id="PRO_0000227845" description="Structural peptide 1" evidence="1">
    <location>
        <begin position="423"/>
        <end position="468"/>
    </location>
</feature>
<feature type="peptide" id="PRO_0000227846" description="Structural peptide 2" evidence="1">
    <location>
        <begin position="469"/>
        <end position="475"/>
    </location>
</feature>
<feature type="peptide" id="PRO_0000227847" description="Structural peptide 3" evidence="1">
    <location>
        <begin position="476"/>
        <end position="482"/>
    </location>
</feature>
<feature type="peptide" id="PRO_0000227848" description="Structural peptide 4" evidence="1">
    <location>
        <begin position="483"/>
        <end position="493"/>
    </location>
</feature>
<feature type="chain" id="PRO_0000036774" description="Protease VP4">
    <location>
        <begin position="494"/>
        <end position="736"/>
    </location>
</feature>
<feature type="chain" id="PRO_0000036775" description="Capsid protein VP3">
    <location>
        <begin position="737"/>
        <end position="993"/>
    </location>
</feature>
<feature type="domain" description="Peptidase S50" evidence="2">
    <location>
        <begin position="494"/>
        <end position="736"/>
    </location>
</feature>
<feature type="region of interest" description="Disordered" evidence="3">
    <location>
        <begin position="950"/>
        <end position="993"/>
    </location>
</feature>
<feature type="region of interest" description="Interaction with VP1 protein" evidence="1">
    <location>
        <begin position="984"/>
        <end position="993"/>
    </location>
</feature>
<feature type="compositionally biased region" description="Basic residues" evidence="3">
    <location>
        <begin position="956"/>
        <end position="967"/>
    </location>
</feature>
<feature type="active site" description="Nucleophile" evidence="2">
    <location>
        <position position="633"/>
    </location>
</feature>
<feature type="active site" evidence="2">
    <location>
        <position position="673"/>
    </location>
</feature>
<feature type="binding site" evidence="1">
    <location>
        <position position="11"/>
    </location>
    <ligand>
        <name>a divalent metal cation</name>
        <dbReference type="ChEBI" id="CHEBI:60240"/>
        <note>ligand shared between trimeric partners</note>
    </ligand>
</feature>
<feature type="site" description="Cleavage; by protease VP4" evidence="1">
    <location>
        <begin position="422"/>
        <end position="423"/>
    </location>
</feature>
<feature type="site" description="Cleavage; by protease VP4" evidence="1">
    <location>
        <begin position="468"/>
        <end position="469"/>
    </location>
</feature>
<feature type="site" description="Cleavage; by protease VP4" evidence="1">
    <location>
        <begin position="475"/>
        <end position="476"/>
    </location>
</feature>
<feature type="site" description="Cleavage; by protease VP4" evidence="1">
    <location>
        <begin position="482"/>
        <end position="483"/>
    </location>
</feature>
<feature type="site" description="Cleavage; by protease VP4" evidence="1">
    <location>
        <begin position="493"/>
        <end position="494"/>
    </location>
</feature>
<feature type="site" description="Cleavage; by protease VP4" evidence="1">
    <location>
        <begin position="736"/>
        <end position="737"/>
    </location>
</feature>
<feature type="non-terminal residue">
    <location>
        <position position="1"/>
    </location>
</feature>
<feature type="helix" evidence="6">
    <location>
        <begin position="828"/>
        <end position="845"/>
    </location>
</feature>
<feature type="helix" evidence="6">
    <location>
        <begin position="853"/>
        <end position="858"/>
    </location>
</feature>
<feature type="helix" evidence="6">
    <location>
        <begin position="866"/>
        <end position="875"/>
    </location>
</feature>
<feature type="turn" evidence="6">
    <location>
        <begin position="886"/>
        <end position="889"/>
    </location>
</feature>
<feature type="helix" evidence="6">
    <location>
        <begin position="899"/>
        <end position="910"/>
    </location>
</feature>
<feature type="helix" evidence="6">
    <location>
        <begin position="913"/>
        <end position="915"/>
    </location>
</feature>
<feature type="helix" evidence="6">
    <location>
        <begin position="920"/>
        <end position="932"/>
    </location>
</feature>
<feature type="turn" evidence="6">
    <location>
        <begin position="933"/>
        <end position="935"/>
    </location>
</feature>
<feature type="helix" evidence="6">
    <location>
        <begin position="940"/>
        <end position="954"/>
    </location>
</feature>
<keyword id="KW-0002">3D-structure</keyword>
<keyword id="KW-0167">Capsid protein</keyword>
<keyword id="KW-1035">Host cytoplasm</keyword>
<keyword id="KW-0378">Hydrolase</keyword>
<keyword id="KW-0479">Metal-binding</keyword>
<keyword id="KW-0645">Protease</keyword>
<keyword id="KW-0720">Serine protease</keyword>
<keyword id="KW-0946">Virion</keyword>
<name>POLS_IBDVP</name>
<reference key="1">
    <citation type="journal article" date="1990" name="J. Gen. Virol.">
        <title>A comparison of the sequences of segment A of four infectious bursal disease virus strains and identification of a variable region in VP2.</title>
        <authorList>
            <person name="Bayliss C.D."/>
            <person name="Spies U."/>
            <person name="Shaw K."/>
            <person name="Peters R.W."/>
            <person name="Papageorgiou A."/>
            <person name="Mueller H."/>
            <person name="Boursnell M.E.G."/>
        </authorList>
    </citation>
    <scope>NUCLEOTIDE SEQUENCE [GENOMIC RNA]</scope>
</reference>
<reference key="2">
    <citation type="journal article" date="2008" name="Structure">
        <title>Structural insights into the multifunctional protein VP3 of birnaviruses.</title>
        <authorList>
            <person name="Casanas A."/>
            <person name="Navarro A."/>
            <person name="Ferrer-Orta C."/>
            <person name="Gonzalez D."/>
            <person name="Rodriguez J.F."/>
            <person name="Verdaguer N."/>
        </authorList>
    </citation>
    <scope>X-RAY CRYSTALLOGRAPHY (2.3 ANGSTROMS) OF 818-956</scope>
    <scope>SUBUNIT (CAPSID PROTEIN VP3)</scope>
</reference>
<dbReference type="EC" id="3.4.21.-"/>
<dbReference type="EMBL" id="D00868">
    <property type="protein sequence ID" value="BAA00741.1"/>
    <property type="molecule type" value="Genomic_RNA"/>
</dbReference>
<dbReference type="PIR" id="JQ0944">
    <property type="entry name" value="GNXS98"/>
</dbReference>
<dbReference type="PDB" id="2R18">
    <property type="method" value="X-ray"/>
    <property type="resolution" value="2.30 A"/>
    <property type="chains" value="A=818-956"/>
</dbReference>
<dbReference type="PDB" id="2Z7J">
    <property type="method" value="X-ray"/>
    <property type="resolution" value="2.40 A"/>
    <property type="chains" value="A=831-955"/>
</dbReference>
<dbReference type="PDBsum" id="2R18"/>
<dbReference type="PDBsum" id="2Z7J"/>
<dbReference type="BMRB" id="P25220"/>
<dbReference type="SMR" id="P25220"/>
<dbReference type="MEROPS" id="S50.002"/>
<dbReference type="EvolutionaryTrace" id="P25220"/>
<dbReference type="GO" id="GO:0030430">
    <property type="term" value="C:host cell cytoplasm"/>
    <property type="evidence" value="ECO:0007669"/>
    <property type="project" value="UniProtKB-SubCell"/>
</dbReference>
<dbReference type="GO" id="GO:0019028">
    <property type="term" value="C:viral capsid"/>
    <property type="evidence" value="ECO:0007669"/>
    <property type="project" value="UniProtKB-KW"/>
</dbReference>
<dbReference type="GO" id="GO:0046872">
    <property type="term" value="F:metal ion binding"/>
    <property type="evidence" value="ECO:0007669"/>
    <property type="project" value="UniProtKB-KW"/>
</dbReference>
<dbReference type="GO" id="GO:0008236">
    <property type="term" value="F:serine-type peptidase activity"/>
    <property type="evidence" value="ECO:0007669"/>
    <property type="project" value="UniProtKB-KW"/>
</dbReference>
<dbReference type="GO" id="GO:0005198">
    <property type="term" value="F:structural molecule activity"/>
    <property type="evidence" value="ECO:0007669"/>
    <property type="project" value="InterPro"/>
</dbReference>
<dbReference type="GO" id="GO:0006508">
    <property type="term" value="P:proteolysis"/>
    <property type="evidence" value="ECO:0007669"/>
    <property type="project" value="UniProtKB-KW"/>
</dbReference>
<dbReference type="FunFam" id="2.60.120.660:FF:000001">
    <property type="entry name" value="Structural polyprotein"/>
    <property type="match status" value="1"/>
</dbReference>
<dbReference type="Gene3D" id="2.60.120.20">
    <property type="match status" value="1"/>
</dbReference>
<dbReference type="Gene3D" id="6.10.250.1030">
    <property type="match status" value="1"/>
</dbReference>
<dbReference type="Gene3D" id="1.10.8.880">
    <property type="entry name" value="Birnavirus VP3 protein, domain 2"/>
    <property type="match status" value="1"/>
</dbReference>
<dbReference type="Gene3D" id="1.10.150.620">
    <property type="entry name" value="Capsid protein VP3, domain 1"/>
    <property type="match status" value="1"/>
</dbReference>
<dbReference type="Gene3D" id="2.60.120.660">
    <property type="entry name" value="icosahedral virus"/>
    <property type="match status" value="1"/>
</dbReference>
<dbReference type="InterPro" id="IPR002662">
    <property type="entry name" value="Birna_VP2"/>
</dbReference>
<dbReference type="InterPro" id="IPR002663">
    <property type="entry name" value="Birna_VP3"/>
</dbReference>
<dbReference type="InterPro" id="IPR043048">
    <property type="entry name" value="Birna_VP3_dom1"/>
</dbReference>
<dbReference type="InterPro" id="IPR043049">
    <property type="entry name" value="Birna_VP3_dom2"/>
</dbReference>
<dbReference type="InterPro" id="IPR025775">
    <property type="entry name" value="Birna_VP4_Prtase_dom"/>
</dbReference>
<dbReference type="InterPro" id="IPR029053">
    <property type="entry name" value="Viral_coat"/>
</dbReference>
<dbReference type="Pfam" id="PF01766">
    <property type="entry name" value="Birna_VP2"/>
    <property type="match status" value="1"/>
</dbReference>
<dbReference type="Pfam" id="PF01767">
    <property type="entry name" value="Birna_VP3"/>
    <property type="match status" value="1"/>
</dbReference>
<dbReference type="Pfam" id="PF01768">
    <property type="entry name" value="Birna_VP4"/>
    <property type="match status" value="1"/>
</dbReference>
<dbReference type="SUPFAM" id="SSF88633">
    <property type="entry name" value="Positive stranded ssRNA viruses"/>
    <property type="match status" value="1"/>
</dbReference>
<dbReference type="PROSITE" id="PS51548">
    <property type="entry name" value="BIRNAVIRUS_VP4_PRO"/>
    <property type="match status" value="1"/>
</dbReference>
<protein>
    <recommendedName>
        <fullName>Structural polyprotein</fullName>
        <shortName>PP</shortName>
    </recommendedName>
    <component>
        <recommendedName>
            <fullName>Precursor of VP2</fullName>
            <shortName>Pre-VP2</shortName>
        </recommendedName>
    </component>
    <component>
        <recommendedName>
            <fullName>Capsid protein VP2</fullName>
        </recommendedName>
    </component>
    <component>
        <recommendedName>
            <fullName>Structural peptide 1</fullName>
            <shortName>p1</shortName>
        </recommendedName>
        <alternativeName>
            <fullName>pep46</fullName>
        </alternativeName>
    </component>
    <component>
        <recommendedName>
            <fullName>Structural peptide 2</fullName>
            <shortName>p2</shortName>
        </recommendedName>
        <alternativeName>
            <fullName>pep7a</fullName>
        </alternativeName>
    </component>
    <component>
        <recommendedName>
            <fullName>Structural peptide 3</fullName>
            <shortName>p3</shortName>
        </recommendedName>
        <alternativeName>
            <fullName>pep7b</fullName>
        </alternativeName>
    </component>
    <component>
        <recommendedName>
            <fullName>Structural peptide 4</fullName>
            <shortName>p4</shortName>
        </recommendedName>
        <alternativeName>
            <fullName>pep11</fullName>
        </alternativeName>
    </component>
    <component>
        <recommendedName>
            <fullName>Protease VP4</fullName>
            <ecNumber>3.4.21.-</ecNumber>
        </recommendedName>
        <alternativeName>
            <fullName>Non-structural protein VP4</fullName>
            <shortName>NS</shortName>
        </alternativeName>
    </component>
    <component>
        <recommendedName>
            <fullName>Capsid protein VP3</fullName>
        </recommendedName>
    </component>
</protein>
<proteinExistence type="evidence at protein level"/>
<sequence>MPTTGPASIPDDTLEKHTLRSETSTYNLTVGDTGSGLIVFFPGFPGSIVGAHYTLQSNGNYKFDQMLLTAQNLPASYNYCRLVSRSLTVRSSTLPGGVYALNGTINAVTFQGSLSELTDVSYNGLMSATANINDKIGNVLVGEGVTVLSLPTSYDLGYVRLGDPIPAIGLDPKMVATCDSSDRPRVYTITAADDYQFSSQYQPGGVTITLFSANIDAITSLSVGGELVFRTSVHGLVLGATIYLIGFDGTTVITRAVAANTGLTTGTDNLMPFNLVIPTNEITQPITSIKLEIVTSKSGGQAGDQMLWSARGSLAVTIHGGNYPGALRPVTLVAYERVATGSVVTVAGVSNFELIPNPELAKNLVTEYGRFDPGAMNYTKLILSERDRLGIKTVWPTREYTDFREYFMEVADLNSPLKIAGAFGFKDIIRAIRRIAVPVVSTLFPPAAPLAHAIGEGVDYLLGDEAQAASGTARAASGKARAASGRIRQLTLAADKGYEVVANLFQVPQNPVVDGILASPGVLRGAHNLDCVLREGATLFPVVITTVEDAMTPKALNSKMFAVIEGVREDLQPPSQRGSFIRTLSGHRVYGYAPDGVLPLETGRDYTVVPIDDVWDDSIMLSKDPIPPIVGNSGNLAIAYMDVFRPKVPIHVAMTGALNACGEIEKVSFRSTKLATAHRLGLKLAGPGAFDVNTGPNWATFIKRFPHNPRDWDRLPYLNLPYLPPNAGRQYHLAMAASEFKETPELESAVRAMEAAANVDPLFQSALSVFMWLEENGIVTDMANFALSDPNAHRMRNFLANAPQAGSKSQRAKYGTAGYGVEARGPTPEEAQREKDTRISKKMETMGIYFATPEWVALNGHRGPSPGQLKYWQNTREIPDPNEDYLDYVHAEKSRLASEEQILRAATSIYGAPGQAEPPQAFIDEVAKVYEINHGRGPNQEQMKDLLLTAMEMKHRNPRRALPKPKPKPNAPTQRPPGRLGRWIRTVSDEDLE</sequence>
<organismHost>
    <name type="scientific">Gallus gallus</name>
    <name type="common">Chicken</name>
    <dbReference type="NCBI Taxonomy" id="9031"/>
</organismHost>
<organismHost>
    <name type="scientific">Meleagris gallopavo</name>
    <name type="common">Wild turkey</name>
    <dbReference type="NCBI Taxonomy" id="9103"/>
</organismHost>